<name>CUC14_CONCL</name>
<proteinExistence type="evidence at transcript level"/>
<keyword id="KW-1015">Disulfide bond</keyword>
<keyword id="KW-0528">Neurotoxin</keyword>
<keyword id="KW-0964">Secreted</keyword>
<keyword id="KW-0800">Toxin</keyword>
<evidence type="ECO:0000250" key="1"/>
<protein>
    <recommendedName>
        <fullName>Conotoxin Cal12.1p4</fullName>
    </recommendedName>
</protein>
<accession>G1C1T2</accession>
<sequence length="69" mass="7899">DLITNSYTRGKPRHVTSWRNLKTRDVCDSLVEGRCIHNGCQCDRSAPHGNCCDTDGCTSLWWCPKTKWD</sequence>
<feature type="propeptide" id="PRO_0000414955" evidence="1">
    <location>
        <begin position="1" status="less than"/>
        <end position="23"/>
    </location>
</feature>
<feature type="peptide" id="PRO_5000785211" description="Conotoxin Cal12.1p4">
    <location>
        <begin position="25"/>
        <end position="69"/>
    </location>
</feature>
<feature type="non-terminal residue">
    <location>
        <position position="1"/>
    </location>
</feature>
<organism>
    <name type="scientific">Californiconus californicus</name>
    <name type="common">California cone</name>
    <name type="synonym">Conus californicus</name>
    <dbReference type="NCBI Taxonomy" id="1736779"/>
    <lineage>
        <taxon>Eukaryota</taxon>
        <taxon>Metazoa</taxon>
        <taxon>Spiralia</taxon>
        <taxon>Lophotrochozoa</taxon>
        <taxon>Mollusca</taxon>
        <taxon>Gastropoda</taxon>
        <taxon>Caenogastropoda</taxon>
        <taxon>Neogastropoda</taxon>
        <taxon>Conoidea</taxon>
        <taxon>Conidae</taxon>
        <taxon>Californiconus</taxon>
    </lineage>
</organism>
<dbReference type="EMBL" id="JF724080">
    <property type="protein sequence ID" value="AEK21700.1"/>
    <property type="molecule type" value="mRNA"/>
</dbReference>
<dbReference type="GO" id="GO:0005576">
    <property type="term" value="C:extracellular region"/>
    <property type="evidence" value="ECO:0007669"/>
    <property type="project" value="UniProtKB-SubCell"/>
</dbReference>
<dbReference type="GO" id="GO:0090729">
    <property type="term" value="F:toxin activity"/>
    <property type="evidence" value="ECO:0007669"/>
    <property type="project" value="UniProtKB-KW"/>
</dbReference>
<comment type="subcellular location">
    <subcellularLocation>
        <location evidence="1">Secreted</location>
    </subcellularLocation>
</comment>
<comment type="tissue specificity">
    <text>Expressed by the venom duct.</text>
</comment>
<comment type="domain">
    <text>The cysteine framework is XII (C-C-C-C-CC-C-C).</text>
</comment>
<comment type="PTM">
    <text>Contains 4 disulfide bonds.</text>
</comment>
<reference key="1">
    <citation type="submission" date="2011-03" db="EMBL/GenBank/DDBJ databases">
        <title>Conotoxins of Conus californicus.</title>
        <authorList>
            <person name="Elliger C.A."/>
            <person name="Lebaric Z.N."/>
            <person name="Gilly W.F."/>
        </authorList>
    </citation>
    <scope>NUCLEOTIDE SEQUENCE [MRNA]</scope>
    <source>
        <tissue>Venom duct</tissue>
    </source>
</reference>